<organism>
    <name type="scientific">Xanthomonas campestris pv. campestris (strain ATCC 33913 / DSM 3586 / NCPPB 528 / LMG 568 / P 25)</name>
    <dbReference type="NCBI Taxonomy" id="190485"/>
    <lineage>
        <taxon>Bacteria</taxon>
        <taxon>Pseudomonadati</taxon>
        <taxon>Pseudomonadota</taxon>
        <taxon>Gammaproteobacteria</taxon>
        <taxon>Lysobacterales</taxon>
        <taxon>Lysobacteraceae</taxon>
        <taxon>Xanthomonas</taxon>
    </lineage>
</organism>
<proteinExistence type="inferred from homology"/>
<evidence type="ECO:0000255" key="1">
    <source>
        <dbReference type="HAMAP-Rule" id="MF_00337"/>
    </source>
</evidence>
<name>EX7S_XANCP</name>
<comment type="function">
    <text evidence="1">Bidirectionally degrades single-stranded DNA into large acid-insoluble oligonucleotides, which are then degraded further into small acid-soluble oligonucleotides.</text>
</comment>
<comment type="catalytic activity">
    <reaction evidence="1">
        <text>Exonucleolytic cleavage in either 5'- to 3'- or 3'- to 5'-direction to yield nucleoside 5'-phosphates.</text>
        <dbReference type="EC" id="3.1.11.6"/>
    </reaction>
</comment>
<comment type="subunit">
    <text evidence="1">Heterooligomer composed of large and small subunits.</text>
</comment>
<comment type="subcellular location">
    <subcellularLocation>
        <location evidence="1">Cytoplasm</location>
    </subcellularLocation>
</comment>
<comment type="similarity">
    <text evidence="1">Belongs to the XseB family.</text>
</comment>
<keyword id="KW-0963">Cytoplasm</keyword>
<keyword id="KW-0269">Exonuclease</keyword>
<keyword id="KW-0378">Hydrolase</keyword>
<keyword id="KW-0540">Nuclease</keyword>
<keyword id="KW-1185">Reference proteome</keyword>
<protein>
    <recommendedName>
        <fullName evidence="1">Exodeoxyribonuclease 7 small subunit</fullName>
        <ecNumber evidence="1">3.1.11.6</ecNumber>
    </recommendedName>
    <alternativeName>
        <fullName evidence="1">Exodeoxyribonuclease VII small subunit</fullName>
        <shortName evidence="1">Exonuclease VII small subunit</shortName>
    </alternativeName>
</protein>
<reference key="1">
    <citation type="journal article" date="2002" name="Nature">
        <title>Comparison of the genomes of two Xanthomonas pathogens with differing host specificities.</title>
        <authorList>
            <person name="da Silva A.C.R."/>
            <person name="Ferro J.A."/>
            <person name="Reinach F.C."/>
            <person name="Farah C.S."/>
            <person name="Furlan L.R."/>
            <person name="Quaggio R.B."/>
            <person name="Monteiro-Vitorello C.B."/>
            <person name="Van Sluys M.A."/>
            <person name="Almeida N.F. Jr."/>
            <person name="Alves L.M.C."/>
            <person name="do Amaral A.M."/>
            <person name="Bertolini M.C."/>
            <person name="Camargo L.E.A."/>
            <person name="Camarotte G."/>
            <person name="Cannavan F."/>
            <person name="Cardozo J."/>
            <person name="Chambergo F."/>
            <person name="Ciapina L.P."/>
            <person name="Cicarelli R.M.B."/>
            <person name="Coutinho L.L."/>
            <person name="Cursino-Santos J.R."/>
            <person name="El-Dorry H."/>
            <person name="Faria J.B."/>
            <person name="Ferreira A.J.S."/>
            <person name="Ferreira R.C.C."/>
            <person name="Ferro M.I.T."/>
            <person name="Formighieri E.F."/>
            <person name="Franco M.C."/>
            <person name="Greggio C.C."/>
            <person name="Gruber A."/>
            <person name="Katsuyama A.M."/>
            <person name="Kishi L.T."/>
            <person name="Leite R.P."/>
            <person name="Lemos E.G.M."/>
            <person name="Lemos M.V.F."/>
            <person name="Locali E.C."/>
            <person name="Machado M.A."/>
            <person name="Madeira A.M.B.N."/>
            <person name="Martinez-Rossi N.M."/>
            <person name="Martins E.C."/>
            <person name="Meidanis J."/>
            <person name="Menck C.F.M."/>
            <person name="Miyaki C.Y."/>
            <person name="Moon D.H."/>
            <person name="Moreira L.M."/>
            <person name="Novo M.T.M."/>
            <person name="Okura V.K."/>
            <person name="Oliveira M.C."/>
            <person name="Oliveira V.R."/>
            <person name="Pereira H.A."/>
            <person name="Rossi A."/>
            <person name="Sena J.A.D."/>
            <person name="Silva C."/>
            <person name="de Souza R.F."/>
            <person name="Spinola L.A.F."/>
            <person name="Takita M.A."/>
            <person name="Tamura R.E."/>
            <person name="Teixeira E.C."/>
            <person name="Tezza R.I.D."/>
            <person name="Trindade dos Santos M."/>
            <person name="Truffi D."/>
            <person name="Tsai S.M."/>
            <person name="White F.F."/>
            <person name="Setubal J.C."/>
            <person name="Kitajima J.P."/>
        </authorList>
    </citation>
    <scope>NUCLEOTIDE SEQUENCE [LARGE SCALE GENOMIC DNA]</scope>
    <source>
        <strain>ATCC 33913 / DSM 3586 / NCPPB 528 / LMG 568 / P 25</strain>
    </source>
</reference>
<sequence>MAKKSLNESSPVARFEQSLEELEQLVQKMEVGEMSLEQSLTAYERGIGLYRDCQQALEQAELRVRLVTDPARPEQAEAFEPPSLDGG</sequence>
<dbReference type="EC" id="3.1.11.6" evidence="1"/>
<dbReference type="EMBL" id="AE008922">
    <property type="protein sequence ID" value="AAM41871.1"/>
    <property type="molecule type" value="Genomic_DNA"/>
</dbReference>
<dbReference type="RefSeq" id="NP_637947.1">
    <property type="nucleotide sequence ID" value="NC_003902.1"/>
</dbReference>
<dbReference type="RefSeq" id="WP_011037729.1">
    <property type="nucleotide sequence ID" value="NC_003902.1"/>
</dbReference>
<dbReference type="SMR" id="Q8P7L2"/>
<dbReference type="STRING" id="190485.XCC2599"/>
<dbReference type="EnsemblBacteria" id="AAM41871">
    <property type="protein sequence ID" value="AAM41871"/>
    <property type="gene ID" value="XCC2599"/>
</dbReference>
<dbReference type="KEGG" id="xcc:XCC2599"/>
<dbReference type="PATRIC" id="fig|190485.4.peg.2767"/>
<dbReference type="eggNOG" id="COG1722">
    <property type="taxonomic scope" value="Bacteria"/>
</dbReference>
<dbReference type="HOGENOM" id="CLU_145918_3_3_6"/>
<dbReference type="OrthoDB" id="9801128at2"/>
<dbReference type="Proteomes" id="UP000001010">
    <property type="component" value="Chromosome"/>
</dbReference>
<dbReference type="GO" id="GO:0005829">
    <property type="term" value="C:cytosol"/>
    <property type="evidence" value="ECO:0000318"/>
    <property type="project" value="GO_Central"/>
</dbReference>
<dbReference type="GO" id="GO:0009318">
    <property type="term" value="C:exodeoxyribonuclease VII complex"/>
    <property type="evidence" value="ECO:0007669"/>
    <property type="project" value="InterPro"/>
</dbReference>
<dbReference type="GO" id="GO:0008855">
    <property type="term" value="F:exodeoxyribonuclease VII activity"/>
    <property type="evidence" value="ECO:0000318"/>
    <property type="project" value="GO_Central"/>
</dbReference>
<dbReference type="GO" id="GO:0006308">
    <property type="term" value="P:DNA catabolic process"/>
    <property type="evidence" value="ECO:0007669"/>
    <property type="project" value="UniProtKB-UniRule"/>
</dbReference>
<dbReference type="Gene3D" id="1.10.287.1040">
    <property type="entry name" value="Exonuclease VII, small subunit"/>
    <property type="match status" value="1"/>
</dbReference>
<dbReference type="HAMAP" id="MF_00337">
    <property type="entry name" value="Exonuc_7_S"/>
    <property type="match status" value="1"/>
</dbReference>
<dbReference type="InterPro" id="IPR003761">
    <property type="entry name" value="Exonuc_VII_S"/>
</dbReference>
<dbReference type="InterPro" id="IPR037004">
    <property type="entry name" value="Exonuc_VII_ssu_sf"/>
</dbReference>
<dbReference type="NCBIfam" id="NF002140">
    <property type="entry name" value="PRK00977.1-4"/>
    <property type="match status" value="1"/>
</dbReference>
<dbReference type="NCBIfam" id="TIGR01280">
    <property type="entry name" value="xseB"/>
    <property type="match status" value="1"/>
</dbReference>
<dbReference type="PANTHER" id="PTHR34137">
    <property type="entry name" value="EXODEOXYRIBONUCLEASE 7 SMALL SUBUNIT"/>
    <property type="match status" value="1"/>
</dbReference>
<dbReference type="PANTHER" id="PTHR34137:SF1">
    <property type="entry name" value="EXODEOXYRIBONUCLEASE 7 SMALL SUBUNIT"/>
    <property type="match status" value="1"/>
</dbReference>
<dbReference type="Pfam" id="PF02609">
    <property type="entry name" value="Exonuc_VII_S"/>
    <property type="match status" value="1"/>
</dbReference>
<dbReference type="PIRSF" id="PIRSF006488">
    <property type="entry name" value="Exonuc_VII_S"/>
    <property type="match status" value="1"/>
</dbReference>
<dbReference type="SUPFAM" id="SSF116842">
    <property type="entry name" value="XseB-like"/>
    <property type="match status" value="1"/>
</dbReference>
<feature type="chain" id="PRO_0000207034" description="Exodeoxyribonuclease 7 small subunit">
    <location>
        <begin position="1"/>
        <end position="87"/>
    </location>
</feature>
<accession>Q8P7L2</accession>
<gene>
    <name evidence="1" type="primary">xseB</name>
    <name type="ordered locus">XCC2599</name>
</gene>